<sequence length="364" mass="41330">MEPLLSLKSVSKSYDDLNILDDIDIDIESGYFYTLLGPSGCGKTTILKLIAGFEYPDSGEVIYQNKPIGNLPPNKRKVNTVFQDYALFPHLNVYDNIAFGLKLKKLSKTEIDQKVTEALKLVKLSGYEKRNINEMSGGQKQRVAIARAIVNEPEILLLDESLSALDLKLRTEMQYELRELQSRLGITFIFVTHDQEEALALSDFLFVLKDGKIQQFGTPTDIYDEPVNRFVADFIGESNIVEGRMVRDYVVNIYGQDFECVDMGIPENKKVEVVIRPEDISLIKAEEGLFKATVDSMLFRGVHYEICCIDNKGYEWVIQTTKKAEVGSEVGLYFDPEAIHIMVPGETEEEFDKRIESYEEVDNA</sequence>
<name>POTA_STAAR</name>
<evidence type="ECO:0000255" key="1">
    <source>
        <dbReference type="HAMAP-Rule" id="MF_01726"/>
    </source>
</evidence>
<proteinExistence type="inferred from homology"/>
<reference key="1">
    <citation type="journal article" date="2004" name="Proc. Natl. Acad. Sci. U.S.A.">
        <title>Complete genomes of two clinical Staphylococcus aureus strains: evidence for the rapid evolution of virulence and drug resistance.</title>
        <authorList>
            <person name="Holden M.T.G."/>
            <person name="Feil E.J."/>
            <person name="Lindsay J.A."/>
            <person name="Peacock S.J."/>
            <person name="Day N.P.J."/>
            <person name="Enright M.C."/>
            <person name="Foster T.J."/>
            <person name="Moore C.E."/>
            <person name="Hurst L."/>
            <person name="Atkin R."/>
            <person name="Barron A."/>
            <person name="Bason N."/>
            <person name="Bentley S.D."/>
            <person name="Chillingworth C."/>
            <person name="Chillingworth T."/>
            <person name="Churcher C."/>
            <person name="Clark L."/>
            <person name="Corton C."/>
            <person name="Cronin A."/>
            <person name="Doggett J."/>
            <person name="Dowd L."/>
            <person name="Feltwell T."/>
            <person name="Hance Z."/>
            <person name="Harris B."/>
            <person name="Hauser H."/>
            <person name="Holroyd S."/>
            <person name="Jagels K."/>
            <person name="James K.D."/>
            <person name="Lennard N."/>
            <person name="Line A."/>
            <person name="Mayes R."/>
            <person name="Moule S."/>
            <person name="Mungall K."/>
            <person name="Ormond D."/>
            <person name="Quail M.A."/>
            <person name="Rabbinowitsch E."/>
            <person name="Rutherford K.M."/>
            <person name="Sanders M."/>
            <person name="Sharp S."/>
            <person name="Simmonds M."/>
            <person name="Stevens K."/>
            <person name="Whitehead S."/>
            <person name="Barrell B.G."/>
            <person name="Spratt B.G."/>
            <person name="Parkhill J."/>
        </authorList>
    </citation>
    <scope>NUCLEOTIDE SEQUENCE [LARGE SCALE GENOMIC DNA]</scope>
    <source>
        <strain>MRSA252</strain>
    </source>
</reference>
<organism>
    <name type="scientific">Staphylococcus aureus (strain MRSA252)</name>
    <dbReference type="NCBI Taxonomy" id="282458"/>
    <lineage>
        <taxon>Bacteria</taxon>
        <taxon>Bacillati</taxon>
        <taxon>Bacillota</taxon>
        <taxon>Bacilli</taxon>
        <taxon>Bacillales</taxon>
        <taxon>Staphylococcaceae</taxon>
        <taxon>Staphylococcus</taxon>
    </lineage>
</organism>
<protein>
    <recommendedName>
        <fullName evidence="1">Spermidine/putrescine import ATP-binding protein PotA</fullName>
        <ecNumber evidence="1">7.6.2.11</ecNumber>
    </recommendedName>
</protein>
<feature type="chain" id="PRO_0000092757" description="Spermidine/putrescine import ATP-binding protein PotA">
    <location>
        <begin position="1"/>
        <end position="364"/>
    </location>
</feature>
<feature type="domain" description="ABC transporter" evidence="1">
    <location>
        <begin position="5"/>
        <end position="235"/>
    </location>
</feature>
<feature type="binding site" evidence="1">
    <location>
        <begin position="37"/>
        <end position="44"/>
    </location>
    <ligand>
        <name>ATP</name>
        <dbReference type="ChEBI" id="CHEBI:30616"/>
    </ligand>
</feature>
<dbReference type="EC" id="7.6.2.11" evidence="1"/>
<dbReference type="EMBL" id="BX571856">
    <property type="protein sequence ID" value="CAG40075.1"/>
    <property type="molecule type" value="Genomic_DNA"/>
</dbReference>
<dbReference type="RefSeq" id="WP_000433551.1">
    <property type="nucleotide sequence ID" value="NC_002952.2"/>
</dbReference>
<dbReference type="SMR" id="Q6GHY6"/>
<dbReference type="KEGG" id="sar:SAR1073"/>
<dbReference type="HOGENOM" id="CLU_000604_1_1_9"/>
<dbReference type="Proteomes" id="UP000000596">
    <property type="component" value="Chromosome"/>
</dbReference>
<dbReference type="GO" id="GO:0043190">
    <property type="term" value="C:ATP-binding cassette (ABC) transporter complex"/>
    <property type="evidence" value="ECO:0007669"/>
    <property type="project" value="InterPro"/>
</dbReference>
<dbReference type="GO" id="GO:0015417">
    <property type="term" value="F:ABC-type polyamine transporter activity"/>
    <property type="evidence" value="ECO:0007669"/>
    <property type="project" value="UniProtKB-EC"/>
</dbReference>
<dbReference type="GO" id="GO:0005524">
    <property type="term" value="F:ATP binding"/>
    <property type="evidence" value="ECO:0007669"/>
    <property type="project" value="UniProtKB-KW"/>
</dbReference>
<dbReference type="GO" id="GO:0016887">
    <property type="term" value="F:ATP hydrolysis activity"/>
    <property type="evidence" value="ECO:0007669"/>
    <property type="project" value="InterPro"/>
</dbReference>
<dbReference type="FunFam" id="3.40.50.300:FF:000133">
    <property type="entry name" value="Spermidine/putrescine import ATP-binding protein PotA"/>
    <property type="match status" value="1"/>
</dbReference>
<dbReference type="Gene3D" id="2.40.50.100">
    <property type="match status" value="1"/>
</dbReference>
<dbReference type="Gene3D" id="3.40.50.300">
    <property type="entry name" value="P-loop containing nucleotide triphosphate hydrolases"/>
    <property type="match status" value="1"/>
</dbReference>
<dbReference type="InterPro" id="IPR003593">
    <property type="entry name" value="AAA+_ATPase"/>
</dbReference>
<dbReference type="InterPro" id="IPR050093">
    <property type="entry name" value="ABC_SmlMolc_Importer"/>
</dbReference>
<dbReference type="InterPro" id="IPR003439">
    <property type="entry name" value="ABC_transporter-like_ATP-bd"/>
</dbReference>
<dbReference type="InterPro" id="IPR017871">
    <property type="entry name" value="ABC_transporter-like_CS"/>
</dbReference>
<dbReference type="InterPro" id="IPR008995">
    <property type="entry name" value="Mo/tungstate-bd_C_term_dom"/>
</dbReference>
<dbReference type="InterPro" id="IPR027417">
    <property type="entry name" value="P-loop_NTPase"/>
</dbReference>
<dbReference type="InterPro" id="IPR013611">
    <property type="entry name" value="Transp-assoc_OB_typ2"/>
</dbReference>
<dbReference type="PANTHER" id="PTHR42781">
    <property type="entry name" value="SPERMIDINE/PUTRESCINE IMPORT ATP-BINDING PROTEIN POTA"/>
    <property type="match status" value="1"/>
</dbReference>
<dbReference type="PANTHER" id="PTHR42781:SF4">
    <property type="entry name" value="SPERMIDINE_PUTRESCINE IMPORT ATP-BINDING PROTEIN POTA"/>
    <property type="match status" value="1"/>
</dbReference>
<dbReference type="Pfam" id="PF00005">
    <property type="entry name" value="ABC_tran"/>
    <property type="match status" value="1"/>
</dbReference>
<dbReference type="Pfam" id="PF08402">
    <property type="entry name" value="TOBE_2"/>
    <property type="match status" value="1"/>
</dbReference>
<dbReference type="SMART" id="SM00382">
    <property type="entry name" value="AAA"/>
    <property type="match status" value="1"/>
</dbReference>
<dbReference type="SUPFAM" id="SSF50331">
    <property type="entry name" value="MOP-like"/>
    <property type="match status" value="1"/>
</dbReference>
<dbReference type="SUPFAM" id="SSF52540">
    <property type="entry name" value="P-loop containing nucleoside triphosphate hydrolases"/>
    <property type="match status" value="1"/>
</dbReference>
<dbReference type="PROSITE" id="PS00211">
    <property type="entry name" value="ABC_TRANSPORTER_1"/>
    <property type="match status" value="1"/>
</dbReference>
<dbReference type="PROSITE" id="PS50893">
    <property type="entry name" value="ABC_TRANSPORTER_2"/>
    <property type="match status" value="1"/>
</dbReference>
<dbReference type="PROSITE" id="PS51305">
    <property type="entry name" value="POTA"/>
    <property type="match status" value="1"/>
</dbReference>
<comment type="function">
    <text evidence="1">Part of the ABC transporter complex PotABCD involved in spermidine/putrescine import. Responsible for energy coupling to the transport system.</text>
</comment>
<comment type="catalytic activity">
    <reaction evidence="1">
        <text>ATP + H2O + polyamine-[polyamine-binding protein]Side 1 = ADP + phosphate + polyamineSide 2 + [polyamine-binding protein]Side 1.</text>
        <dbReference type="EC" id="7.6.2.11"/>
    </reaction>
</comment>
<comment type="subunit">
    <text evidence="1">The complex is composed of two ATP-binding proteins (PotA), two transmembrane proteins (PotB and PotC) and a solute-binding protein (PotD).</text>
</comment>
<comment type="subcellular location">
    <subcellularLocation>
        <location evidence="1">Cell membrane</location>
        <topology evidence="1">Peripheral membrane protein</topology>
    </subcellularLocation>
</comment>
<comment type="similarity">
    <text evidence="1">Belongs to the ABC transporter superfamily. Spermidine/putrescine importer (TC 3.A.1.11.1) family.</text>
</comment>
<keyword id="KW-0067">ATP-binding</keyword>
<keyword id="KW-1003">Cell membrane</keyword>
<keyword id="KW-0472">Membrane</keyword>
<keyword id="KW-0547">Nucleotide-binding</keyword>
<keyword id="KW-1278">Translocase</keyword>
<keyword id="KW-0813">Transport</keyword>
<accession>Q6GHY6</accession>
<gene>
    <name evidence="1" type="primary">potA</name>
    <name type="ordered locus">SAR1073</name>
</gene>